<protein>
    <recommendedName>
        <fullName>ATP-binding cassette sub-family C member 8</fullName>
    </recommendedName>
    <alternativeName>
        <fullName>Sulfonylurea receptor 1</fullName>
    </alternativeName>
</protein>
<keyword id="KW-0025">Alternative splicing</keyword>
<keyword id="KW-0067">ATP-binding</keyword>
<keyword id="KW-1003">Cell membrane</keyword>
<keyword id="KW-1015">Disulfide bond</keyword>
<keyword id="KW-0325">Glycoprotein</keyword>
<keyword id="KW-0460">Magnesium</keyword>
<keyword id="KW-0472">Membrane</keyword>
<keyword id="KW-0479">Metal-binding</keyword>
<keyword id="KW-0547">Nucleotide-binding</keyword>
<keyword id="KW-0675">Receptor</keyword>
<keyword id="KW-1185">Reference proteome</keyword>
<keyword id="KW-0677">Repeat</keyword>
<keyword id="KW-0812">Transmembrane</keyword>
<keyword id="KW-1133">Transmembrane helix</keyword>
<keyword id="KW-0813">Transport</keyword>
<dbReference type="EMBL" id="L40624">
    <property type="protein sequence ID" value="AAA99237.1"/>
    <property type="molecule type" value="mRNA"/>
</dbReference>
<dbReference type="EMBL" id="X97279">
    <property type="protein sequence ID" value="CAA65934.1"/>
    <property type="molecule type" value="mRNA"/>
</dbReference>
<dbReference type="EMBL" id="AF039595">
    <property type="protein sequence ID" value="AAB96684.1"/>
    <property type="molecule type" value="mRNA"/>
</dbReference>
<dbReference type="EMBL" id="AB052294">
    <property type="protein sequence ID" value="BAB19011.1"/>
    <property type="molecule type" value="mRNA"/>
</dbReference>
<dbReference type="RefSeq" id="NP_001398963.1">
    <molecule id="Q09429-2"/>
    <property type="nucleotide sequence ID" value="NM_001412034.1"/>
</dbReference>
<dbReference type="RefSeq" id="NP_037171.2">
    <molecule id="Q09429-1"/>
    <property type="nucleotide sequence ID" value="NM_013039.3"/>
</dbReference>
<dbReference type="RefSeq" id="XP_008757542.1">
    <molecule id="Q09429-3"/>
    <property type="nucleotide sequence ID" value="XM_008759320.3"/>
</dbReference>
<dbReference type="SMR" id="Q09429"/>
<dbReference type="ComplexPortal" id="CPX-186">
    <property type="entry name" value="Inward rectifying potassium channel complex, Kir6.2-SUR1"/>
</dbReference>
<dbReference type="CORUM" id="Q09429"/>
<dbReference type="FunCoup" id="Q09429">
    <property type="interactions" value="434"/>
</dbReference>
<dbReference type="STRING" id="10116.ENSRNOP00000028696"/>
<dbReference type="BindingDB" id="Q09429"/>
<dbReference type="ChEMBL" id="CHEMBL1944490"/>
<dbReference type="DrugCentral" id="Q09429"/>
<dbReference type="GlyCosmos" id="Q09429">
    <property type="glycosylation" value="2 sites, No reported glycans"/>
</dbReference>
<dbReference type="GlyGen" id="Q09429">
    <property type="glycosylation" value="2 sites"/>
</dbReference>
<dbReference type="iPTMnet" id="Q09429"/>
<dbReference type="PhosphoSitePlus" id="Q09429"/>
<dbReference type="PaxDb" id="10116-ENSRNOP00000028696"/>
<dbReference type="ABCD" id="Q09429">
    <property type="antibodies" value="2 sequenced antibodies"/>
</dbReference>
<dbReference type="Ensembl" id="ENSRNOT00000028696.8">
    <molecule id="Q09429-1"/>
    <property type="protein sequence ID" value="ENSRNOP00000028696.6"/>
    <property type="gene ID" value="ENSRNOG00000021130.9"/>
</dbReference>
<dbReference type="Ensembl" id="ENSRNOT00000038798.5">
    <molecule id="Q09429-2"/>
    <property type="protein sequence ID" value="ENSRNOP00000035010.4"/>
    <property type="gene ID" value="ENSRNOG00000021130.9"/>
</dbReference>
<dbReference type="GeneID" id="25559"/>
<dbReference type="KEGG" id="rno:25559"/>
<dbReference type="UCSC" id="RGD:3786">
    <molecule id="Q09429-1"/>
    <property type="organism name" value="rat"/>
</dbReference>
<dbReference type="AGR" id="RGD:3786"/>
<dbReference type="CTD" id="6833"/>
<dbReference type="RGD" id="3786">
    <property type="gene designation" value="Abcc8"/>
</dbReference>
<dbReference type="eggNOG" id="KOG0054">
    <property type="taxonomic scope" value="Eukaryota"/>
</dbReference>
<dbReference type="GeneTree" id="ENSGT00940000156626"/>
<dbReference type="HOGENOM" id="CLU_000604_27_3_1"/>
<dbReference type="InParanoid" id="Q09429"/>
<dbReference type="OMA" id="ANTVVLW"/>
<dbReference type="OrthoDB" id="6500128at2759"/>
<dbReference type="PhylomeDB" id="Q09429"/>
<dbReference type="Reactome" id="R-RNO-1296025">
    <property type="pathway name" value="ATP sensitive Potassium channels"/>
</dbReference>
<dbReference type="Reactome" id="R-RNO-422356">
    <property type="pathway name" value="Regulation of insulin secretion"/>
</dbReference>
<dbReference type="PRO" id="PR:Q09429"/>
<dbReference type="Proteomes" id="UP000002494">
    <property type="component" value="Chromosome 1"/>
</dbReference>
<dbReference type="Bgee" id="ENSRNOG00000021130">
    <property type="expression patterns" value="Expressed in cerebellum and 13 other cell types or tissues"/>
</dbReference>
<dbReference type="GO" id="GO:0008282">
    <property type="term" value="C:inward rectifying potassium channel"/>
    <property type="evidence" value="ECO:0000314"/>
    <property type="project" value="RGD"/>
</dbReference>
<dbReference type="GO" id="GO:0016020">
    <property type="term" value="C:membrane"/>
    <property type="evidence" value="ECO:0000318"/>
    <property type="project" value="GO_Central"/>
</dbReference>
<dbReference type="GO" id="GO:0005886">
    <property type="term" value="C:plasma membrane"/>
    <property type="evidence" value="ECO:0000266"/>
    <property type="project" value="RGD"/>
</dbReference>
<dbReference type="GO" id="GO:0042734">
    <property type="term" value="C:presynaptic membrane"/>
    <property type="evidence" value="ECO:0000314"/>
    <property type="project" value="SynGO"/>
</dbReference>
<dbReference type="GO" id="GO:0032991">
    <property type="term" value="C:protein-containing complex"/>
    <property type="evidence" value="ECO:0000266"/>
    <property type="project" value="RGD"/>
</dbReference>
<dbReference type="GO" id="GO:0042383">
    <property type="term" value="C:sarcolemma"/>
    <property type="evidence" value="ECO:0000314"/>
    <property type="project" value="RGD"/>
</dbReference>
<dbReference type="GO" id="GO:0030672">
    <property type="term" value="C:synaptic vesicle membrane"/>
    <property type="evidence" value="ECO:0000314"/>
    <property type="project" value="RGD"/>
</dbReference>
<dbReference type="GO" id="GO:0140359">
    <property type="term" value="F:ABC-type transporter activity"/>
    <property type="evidence" value="ECO:0007669"/>
    <property type="project" value="InterPro"/>
</dbReference>
<dbReference type="GO" id="GO:0043531">
    <property type="term" value="F:ADP binding"/>
    <property type="evidence" value="ECO:0000266"/>
    <property type="project" value="RGD"/>
</dbReference>
<dbReference type="GO" id="GO:0005524">
    <property type="term" value="F:ATP binding"/>
    <property type="evidence" value="ECO:0000266"/>
    <property type="project" value="RGD"/>
</dbReference>
<dbReference type="GO" id="GO:0016887">
    <property type="term" value="F:ATP hydrolysis activity"/>
    <property type="evidence" value="ECO:0007669"/>
    <property type="project" value="InterPro"/>
</dbReference>
<dbReference type="GO" id="GO:0019829">
    <property type="term" value="F:ATPase-coupled monoatomic cation transmembrane transporter activity"/>
    <property type="evidence" value="ECO:0000266"/>
    <property type="project" value="RGD"/>
</dbReference>
<dbReference type="GO" id="GO:0042626">
    <property type="term" value="F:ATPase-coupled transmembrane transporter activity"/>
    <property type="evidence" value="ECO:0000318"/>
    <property type="project" value="GO_Central"/>
</dbReference>
<dbReference type="GO" id="GO:0046872">
    <property type="term" value="F:metal ion binding"/>
    <property type="evidence" value="ECO:0007669"/>
    <property type="project" value="UniProtKB-KW"/>
</dbReference>
<dbReference type="GO" id="GO:0005267">
    <property type="term" value="F:potassium channel activity"/>
    <property type="evidence" value="ECO:0000250"/>
    <property type="project" value="UniProtKB"/>
</dbReference>
<dbReference type="GO" id="GO:0008281">
    <property type="term" value="F:sulfonylurea receptor activity"/>
    <property type="evidence" value="ECO:0007669"/>
    <property type="project" value="InterPro"/>
</dbReference>
<dbReference type="GO" id="GO:0044325">
    <property type="term" value="F:transmembrane transporter binding"/>
    <property type="evidence" value="ECO:0000266"/>
    <property type="project" value="RGD"/>
</dbReference>
<dbReference type="GO" id="GO:0001508">
    <property type="term" value="P:action potential"/>
    <property type="evidence" value="ECO:0000266"/>
    <property type="project" value="RGD"/>
</dbReference>
<dbReference type="GO" id="GO:0031669">
    <property type="term" value="P:cellular response to nutrient levels"/>
    <property type="evidence" value="ECO:0000266"/>
    <property type="project" value="RGD"/>
</dbReference>
<dbReference type="GO" id="GO:0007565">
    <property type="term" value="P:female pregnancy"/>
    <property type="evidence" value="ECO:0000270"/>
    <property type="project" value="RGD"/>
</dbReference>
<dbReference type="GO" id="GO:0061535">
    <property type="term" value="P:glutamate secretion, neurotransmission"/>
    <property type="evidence" value="ECO:0000266"/>
    <property type="project" value="RGD"/>
</dbReference>
<dbReference type="GO" id="GO:0001678">
    <property type="term" value="P:intracellular glucose homeostasis"/>
    <property type="evidence" value="ECO:0000315"/>
    <property type="project" value="RGD"/>
</dbReference>
<dbReference type="GO" id="GO:0007613">
    <property type="term" value="P:memory"/>
    <property type="evidence" value="ECO:0000315"/>
    <property type="project" value="RGD"/>
</dbReference>
<dbReference type="GO" id="GO:0016525">
    <property type="term" value="P:negative regulation of angiogenesis"/>
    <property type="evidence" value="ECO:0000315"/>
    <property type="project" value="RGD"/>
</dbReference>
<dbReference type="GO" id="GO:1905604">
    <property type="term" value="P:negative regulation of blood-brain barrier permeability"/>
    <property type="evidence" value="ECO:0000315"/>
    <property type="project" value="RGD"/>
</dbReference>
<dbReference type="GO" id="GO:0060253">
    <property type="term" value="P:negative regulation of glial cell proliferation"/>
    <property type="evidence" value="ECO:0000315"/>
    <property type="project" value="RGD"/>
</dbReference>
<dbReference type="GO" id="GO:0046676">
    <property type="term" value="P:negative regulation of insulin secretion"/>
    <property type="evidence" value="ECO:0000314"/>
    <property type="project" value="RGD"/>
</dbReference>
<dbReference type="GO" id="GO:0010989">
    <property type="term" value="P:negative regulation of low-density lipoprotein particle clearance"/>
    <property type="evidence" value="ECO:0000315"/>
    <property type="project" value="RGD"/>
</dbReference>
<dbReference type="GO" id="GO:0061855">
    <property type="term" value="P:negative regulation of neuroblast migration"/>
    <property type="evidence" value="ECO:0000315"/>
    <property type="project" value="RGD"/>
</dbReference>
<dbReference type="GO" id="GO:0050768">
    <property type="term" value="P:negative regulation of neurogenesis"/>
    <property type="evidence" value="ECO:0000315"/>
    <property type="project" value="RGD"/>
</dbReference>
<dbReference type="GO" id="GO:0050905">
    <property type="term" value="P:neuromuscular process"/>
    <property type="evidence" value="ECO:0000266"/>
    <property type="project" value="RGD"/>
</dbReference>
<dbReference type="GO" id="GO:0035774">
    <property type="term" value="P:positive regulation of insulin secretion involved in cellular response to glucose stimulus"/>
    <property type="evidence" value="ECO:0000266"/>
    <property type="project" value="RGD"/>
</dbReference>
<dbReference type="GO" id="GO:0043268">
    <property type="term" value="P:positive regulation of potassium ion transport"/>
    <property type="evidence" value="ECO:0000314"/>
    <property type="project" value="RGD"/>
</dbReference>
<dbReference type="GO" id="GO:1905075">
    <property type="term" value="P:positive regulation of tight junction disassembly"/>
    <property type="evidence" value="ECO:0000315"/>
    <property type="project" value="RGD"/>
</dbReference>
<dbReference type="GO" id="GO:0032760">
    <property type="term" value="P:positive regulation of tumor necrosis factor production"/>
    <property type="evidence" value="ECO:0000315"/>
    <property type="project" value="RGD"/>
</dbReference>
<dbReference type="GO" id="GO:1900721">
    <property type="term" value="P:positive regulation of uterine smooth muscle relaxation"/>
    <property type="evidence" value="ECO:0000315"/>
    <property type="project" value="RGD"/>
</dbReference>
<dbReference type="GO" id="GO:1990573">
    <property type="term" value="P:potassium ion import across plasma membrane"/>
    <property type="evidence" value="ECO:0000250"/>
    <property type="project" value="ComplexPortal"/>
</dbReference>
<dbReference type="GO" id="GO:0032868">
    <property type="term" value="P:response to insulin"/>
    <property type="evidence" value="ECO:0000270"/>
    <property type="project" value="RGD"/>
</dbReference>
<dbReference type="GO" id="GO:0032496">
    <property type="term" value="P:response to lipopolysaccharide"/>
    <property type="evidence" value="ECO:0000270"/>
    <property type="project" value="RGD"/>
</dbReference>
<dbReference type="GO" id="GO:0009268">
    <property type="term" value="P:response to pH"/>
    <property type="evidence" value="ECO:0000314"/>
    <property type="project" value="RGD"/>
</dbReference>
<dbReference type="GO" id="GO:0009410">
    <property type="term" value="P:response to xenobiotic stimulus"/>
    <property type="evidence" value="ECO:0000270"/>
    <property type="project" value="RGD"/>
</dbReference>
<dbReference type="GO" id="GO:0010043">
    <property type="term" value="P:response to zinc ion"/>
    <property type="evidence" value="ECO:0000314"/>
    <property type="project" value="RGD"/>
</dbReference>
<dbReference type="GO" id="GO:0055085">
    <property type="term" value="P:transmembrane transport"/>
    <property type="evidence" value="ECO:0000318"/>
    <property type="project" value="GO_Central"/>
</dbReference>
<dbReference type="GO" id="GO:0008542">
    <property type="term" value="P:visual learning"/>
    <property type="evidence" value="ECO:0000315"/>
    <property type="project" value="RGD"/>
</dbReference>
<dbReference type="CDD" id="cd18591">
    <property type="entry name" value="ABC_6TM_SUR1_D1_like"/>
    <property type="match status" value="1"/>
</dbReference>
<dbReference type="CDD" id="cd18602">
    <property type="entry name" value="ABC_6TM_SUR1_D2_like"/>
    <property type="match status" value="1"/>
</dbReference>
<dbReference type="CDD" id="cd03288">
    <property type="entry name" value="ABCC_SUR2"/>
    <property type="match status" value="1"/>
</dbReference>
<dbReference type="FunFam" id="1.20.1560.10:FF:000416">
    <property type="entry name" value="ATP-binding cassette sub-family C member 8"/>
    <property type="match status" value="1"/>
</dbReference>
<dbReference type="FunFam" id="1.20.1560.10:FF:000369">
    <property type="entry name" value="ATP-binding cassette, sub-family C (CFTR/MRP), member 8"/>
    <property type="match status" value="1"/>
</dbReference>
<dbReference type="FunFam" id="1.20.1560.10:FF:000005">
    <property type="entry name" value="ATP-binding cassette, sub-family C (CFTR/MRP), member 9"/>
    <property type="match status" value="1"/>
</dbReference>
<dbReference type="FunFam" id="3.40.50.300:FF:000197">
    <property type="entry name" value="ATP-binding cassette, sub-family C (CFTR/MRP), member 9"/>
    <property type="match status" value="1"/>
</dbReference>
<dbReference type="FunFam" id="3.40.50.300:FF:000394">
    <property type="entry name" value="ATP-binding cassette, sub-family C (CFTR/MRP), member 9"/>
    <property type="match status" value="1"/>
</dbReference>
<dbReference type="Gene3D" id="1.20.1560.10">
    <property type="entry name" value="ABC transporter type 1, transmembrane domain"/>
    <property type="match status" value="2"/>
</dbReference>
<dbReference type="Gene3D" id="3.40.50.300">
    <property type="entry name" value="P-loop containing nucleotide triphosphate hydrolases"/>
    <property type="match status" value="2"/>
</dbReference>
<dbReference type="InterPro" id="IPR003593">
    <property type="entry name" value="AAA+_ATPase"/>
</dbReference>
<dbReference type="InterPro" id="IPR011527">
    <property type="entry name" value="ABC1_TM_dom"/>
</dbReference>
<dbReference type="InterPro" id="IPR036640">
    <property type="entry name" value="ABC1_TM_sf"/>
</dbReference>
<dbReference type="InterPro" id="IPR003439">
    <property type="entry name" value="ABC_transporter-like_ATP-bd"/>
</dbReference>
<dbReference type="InterPro" id="IPR017871">
    <property type="entry name" value="ABC_transporter-like_CS"/>
</dbReference>
<dbReference type="InterPro" id="IPR050173">
    <property type="entry name" value="ABC_transporter_C-like"/>
</dbReference>
<dbReference type="InterPro" id="IPR000844">
    <property type="entry name" value="ABCC8"/>
</dbReference>
<dbReference type="InterPro" id="IPR000388">
    <property type="entry name" value="ABCC8/9"/>
</dbReference>
<dbReference type="InterPro" id="IPR027417">
    <property type="entry name" value="P-loop_NTPase"/>
</dbReference>
<dbReference type="PANTHER" id="PTHR24223">
    <property type="entry name" value="ATP-BINDING CASSETTE SUB-FAMILY C"/>
    <property type="match status" value="1"/>
</dbReference>
<dbReference type="PANTHER" id="PTHR24223:SF187">
    <property type="entry name" value="ATP-BINDING CASSETTE SUB-FAMILY C MEMBER 8"/>
    <property type="match status" value="1"/>
</dbReference>
<dbReference type="Pfam" id="PF00664">
    <property type="entry name" value="ABC_membrane"/>
    <property type="match status" value="2"/>
</dbReference>
<dbReference type="Pfam" id="PF00005">
    <property type="entry name" value="ABC_tran"/>
    <property type="match status" value="2"/>
</dbReference>
<dbReference type="PRINTS" id="PR01093">
    <property type="entry name" value="SULFNYLUR1"/>
</dbReference>
<dbReference type="PRINTS" id="PR01092">
    <property type="entry name" value="SULFNYLUREAR"/>
</dbReference>
<dbReference type="SMART" id="SM00382">
    <property type="entry name" value="AAA"/>
    <property type="match status" value="2"/>
</dbReference>
<dbReference type="SUPFAM" id="SSF90123">
    <property type="entry name" value="ABC transporter transmembrane region"/>
    <property type="match status" value="2"/>
</dbReference>
<dbReference type="SUPFAM" id="SSF52540">
    <property type="entry name" value="P-loop containing nucleoside triphosphate hydrolases"/>
    <property type="match status" value="2"/>
</dbReference>
<dbReference type="PROSITE" id="PS50929">
    <property type="entry name" value="ABC_TM1F"/>
    <property type="match status" value="2"/>
</dbReference>
<dbReference type="PROSITE" id="PS00211">
    <property type="entry name" value="ABC_TRANSPORTER_1"/>
    <property type="match status" value="2"/>
</dbReference>
<dbReference type="PROSITE" id="PS50893">
    <property type="entry name" value="ABC_TRANSPORTER_2"/>
    <property type="match status" value="2"/>
</dbReference>
<name>ABCC8_RAT</name>
<evidence type="ECO:0000250" key="1">
    <source>
        <dbReference type="UniProtKB" id="Q09427"/>
    </source>
</evidence>
<evidence type="ECO:0000250" key="2">
    <source>
        <dbReference type="UniProtKB" id="Q09428"/>
    </source>
</evidence>
<evidence type="ECO:0000255" key="3">
    <source>
        <dbReference type="PROSITE-ProRule" id="PRU00434"/>
    </source>
</evidence>
<evidence type="ECO:0000255" key="4">
    <source>
        <dbReference type="PROSITE-ProRule" id="PRU00441"/>
    </source>
</evidence>
<evidence type="ECO:0000256" key="5">
    <source>
        <dbReference type="SAM" id="MobiDB-lite"/>
    </source>
</evidence>
<evidence type="ECO:0000269" key="6">
    <source>
    </source>
</evidence>
<evidence type="ECO:0000303" key="7">
    <source>
    </source>
</evidence>
<evidence type="ECO:0000303" key="8">
    <source ref="3"/>
</evidence>
<evidence type="ECO:0000305" key="9"/>
<organism>
    <name type="scientific">Rattus norvegicus</name>
    <name type="common">Rat</name>
    <dbReference type="NCBI Taxonomy" id="10116"/>
    <lineage>
        <taxon>Eukaryota</taxon>
        <taxon>Metazoa</taxon>
        <taxon>Chordata</taxon>
        <taxon>Craniata</taxon>
        <taxon>Vertebrata</taxon>
        <taxon>Euteleostomi</taxon>
        <taxon>Mammalia</taxon>
        <taxon>Eutheria</taxon>
        <taxon>Euarchontoglires</taxon>
        <taxon>Glires</taxon>
        <taxon>Rodentia</taxon>
        <taxon>Myomorpha</taxon>
        <taxon>Muroidea</taxon>
        <taxon>Muridae</taxon>
        <taxon>Murinae</taxon>
        <taxon>Rattus</taxon>
    </lineage>
</organism>
<proteinExistence type="evidence at protein level"/>
<sequence length="1582" mass="177185">MPLAFCGTENHSAAYRVDQGVLNNGCFVDALNVVPHVFLLFITFPILFIGWGSQSSKVHIHHSTWLHFPGHNLRWILTFILLFVLVCEIAEGILSDGVTESRHLHLYMPAGMAFMAAITSVVYYHNIETSNFPKLLIALLIYWTLAFITKTIKFVKFYDHAIGFSQLRFCLTGLLVILYGMLLLVEVNVIRVRRYVFFKTPREVKPPEDLQDLGVRFLQPFVNLLSKGTYWWMNAFIKTAHKKPIDLRAIGKLPIAMRALTNYQRLCLAFDAQARKDTQSQQGARAIWRALCHAFGRRLVLSSTFRILADLLGFAGPLCIFGIVDHLGKENHVFQPKTQFLGVYFVSSQEFLGNAYVLAVLLFLALLLQRTFLQASYYVAIETGINLRGAIQTKIYNKIMHLSTSNLSMGEMTAGQICNLVAIDTNQLMWFFFLCPNLWAMPVQIIVGVILLYYILGVSALIGAAVIILLAPVQYFVATKLSQAQRSTLEYSNERLKQTNEMLRGIKLLKLYAWENIFCSRVEKTRRKEMTSLRAFAVYTSISIFMNTAIPIAAVLITFVGHVSFFKESDFSPSVAFASLSLFHILVTPLFLLSSVVRSTVKALVSVQKLSEFLSSAEIREEQCAPREPAPQGQAGKYQAVPLKVVNRKRPAREEVRDLLGPLQRLTPSTDGDADNFCVQIIGGFFTWTPDGIPTLSNITIRIPRGQLTMIVGQVGCGKSSLLLATLGEMQKVSGAVFWNSSLPDSEGEDPSNPERETAADSDARSRGPVAYASQKPWLLNATVEENITFESPFNKQRYKMVIEACSLQPDIDILPHGDQTQIGERGINLSGGQRQRISVARALYQHTNVVFLDDPFSALDVHLSDHLMQAGILELLRDDKRTVVLVTHKLQYLPHADWIIAMKDGTIQREGTLKDFQRSECQLFEHWKTLMNRQDQELEKETVMERKAPEPSQGLPRAMSSRDGLLLDEDEEEEEAAESEEDDNLSSVLHQRAKIPWRACTKYLSSAGILLLSLLVFSQLLKHMVLVAIDYWLAKWTDSALVLSPAARNCSLSQECALDQSVYAMVFTVLCSLGIALCLVTSVTVEWTGLKVAKRLHRSLLNRIILAPMRFFETTPLGSILNRFSSDCNTIDQHIPSTLECLSRSTLLCVSALAVISYVTPVFLVALLPLAVVCYFIQKYFRVASRDLQQLDDTTQLPLLSHFAETVEGLTTIRAFRYEARFQQKLLEYTDSNNIASLFLTAANRWLEVRMEYIGACVVLIAAATSISNSLHRELSAGLVGLGLTYALMVSNYLNWMVRNLADMEIQLGAVKRIHTLLKTEAESYEGLLAPSLIPKNWPDQGKIQIQNLSVRYDSSLKPVLKHVNALISPGQKIGICGRTGSGKSSFSLAFFRMVDMFEGRIIIDGIDIAKLPLHTLRSRLSIILQDPVLFSGTIRFNLDPEKKCSDSTLWEALEIAQLKLVVKALPGGLDAIITEGGENFSQGQRQLFCLARAFVRKTSIFIMDEATASIDMATENILQKVVMTAFADRTVVTIAHRVHTILSADLVMVLKRGAILEFDKPEKLLSQKDSVFASFVRADK</sequence>
<accession>Q09429</accession>
<accession>O54989</accession>
<accession>P70532</accession>
<accession>Q9EQT0</accession>
<feature type="chain" id="PRO_0000093401" description="ATP-binding cassette sub-family C member 8">
    <location>
        <begin position="1"/>
        <end position="1582"/>
    </location>
</feature>
<feature type="topological domain" description="Extracellular" evidence="9">
    <location>
        <begin position="1"/>
        <end position="30"/>
    </location>
</feature>
<feature type="transmembrane region" description="Helical; Name=1" evidence="2">
    <location>
        <begin position="31"/>
        <end position="47"/>
    </location>
</feature>
<feature type="topological domain" description="Cytoplasmic" evidence="9">
    <location>
        <begin position="48"/>
        <end position="72"/>
    </location>
</feature>
<feature type="transmembrane region" description="Helical; Name=2" evidence="2">
    <location>
        <begin position="73"/>
        <end position="89"/>
    </location>
</feature>
<feature type="topological domain" description="Extracellular" evidence="9">
    <location>
        <begin position="90"/>
        <end position="106"/>
    </location>
</feature>
<feature type="transmembrane region" description="Helical; Name=3" evidence="2">
    <location>
        <begin position="107"/>
        <end position="123"/>
    </location>
</feature>
<feature type="topological domain" description="Cytoplasmic" evidence="9">
    <location>
        <begin position="124"/>
        <end position="136"/>
    </location>
</feature>
<feature type="transmembrane region" description="Helical; Name=4" evidence="2">
    <location>
        <begin position="137"/>
        <end position="153"/>
    </location>
</feature>
<feature type="topological domain" description="Extracellular" evidence="9">
    <location>
        <begin position="154"/>
        <end position="169"/>
    </location>
</feature>
<feature type="transmembrane region" description="Helical; Name=5" evidence="2">
    <location>
        <begin position="170"/>
        <end position="186"/>
    </location>
</feature>
<feature type="topological domain" description="Cytoplasmic" evidence="9">
    <location>
        <begin position="187"/>
        <end position="303"/>
    </location>
</feature>
<feature type="transmembrane region" description="Helical; Name=6" evidence="2">
    <location>
        <begin position="304"/>
        <end position="319"/>
    </location>
</feature>
<feature type="topological domain" description="Extracellular" evidence="9">
    <location>
        <begin position="320"/>
        <end position="356"/>
    </location>
</feature>
<feature type="transmembrane region" description="Helical; Name=7" evidence="2">
    <location>
        <begin position="357"/>
        <end position="372"/>
    </location>
</feature>
<feature type="topological domain" description="Cytoplasmic" evidence="9">
    <location>
        <begin position="373"/>
        <end position="438"/>
    </location>
</feature>
<feature type="transmembrane region" description="Helical; Name=8" evidence="2">
    <location>
        <begin position="439"/>
        <end position="454"/>
    </location>
</feature>
<feature type="topological domain" description="Extracellular" evidence="9">
    <location>
        <begin position="455"/>
        <end position="460"/>
    </location>
</feature>
<feature type="transmembrane region" description="Helical; Name=9" evidence="2">
    <location>
        <begin position="461"/>
        <end position="473"/>
    </location>
</feature>
<feature type="topological domain" description="Cytoplasmic" evidence="9">
    <location>
        <begin position="474"/>
        <end position="541"/>
    </location>
</feature>
<feature type="transmembrane region" description="Helical; Name=10" evidence="2">
    <location>
        <begin position="542"/>
        <end position="557"/>
    </location>
</feature>
<feature type="topological domain" description="Extracellular" evidence="9">
    <location>
        <begin position="558"/>
        <end position="576"/>
    </location>
</feature>
<feature type="transmembrane region" description="Helical; Name=11" evidence="2">
    <location>
        <begin position="577"/>
        <end position="592"/>
    </location>
</feature>
<feature type="topological domain" description="Cytoplasmic" evidence="9">
    <location>
        <begin position="593"/>
        <end position="1013"/>
    </location>
</feature>
<feature type="transmembrane region" description="Helical; Name=12" evidence="2">
    <location>
        <begin position="1014"/>
        <end position="1031"/>
    </location>
</feature>
<feature type="topological domain" description="Extracellular" evidence="9">
    <location>
        <begin position="1032"/>
        <end position="1067"/>
    </location>
</feature>
<feature type="transmembrane region" description="Helical; Name=13" evidence="2">
    <location>
        <begin position="1068"/>
        <end position="1084"/>
    </location>
</feature>
<feature type="topological domain" description="Cytoplasmic" evidence="9">
    <location>
        <begin position="1085"/>
        <end position="1143"/>
    </location>
</feature>
<feature type="transmembrane region" description="Helical; Name=14" evidence="2">
    <location>
        <begin position="1144"/>
        <end position="1161"/>
    </location>
</feature>
<feature type="topological domain" description="Extracellular" evidence="9">
    <location>
        <position position="1162"/>
    </location>
</feature>
<feature type="transmembrane region" description="Helical; Name=15" evidence="2">
    <location>
        <begin position="1163"/>
        <end position="1175"/>
    </location>
</feature>
<feature type="topological domain" description="Cytoplasmic" evidence="9">
    <location>
        <begin position="1176"/>
        <end position="1249"/>
    </location>
</feature>
<feature type="transmembrane region" description="Helical; Name=16" evidence="2">
    <location>
        <begin position="1250"/>
        <end position="1265"/>
    </location>
</feature>
<feature type="topological domain" description="Extracellular" evidence="9">
    <location>
        <begin position="1266"/>
        <end position="1281"/>
    </location>
</feature>
<feature type="transmembrane region" description="Helical; Name=17" evidence="2">
    <location>
        <begin position="1282"/>
        <end position="1297"/>
    </location>
</feature>
<feature type="topological domain" description="Cytoplasmic" evidence="9">
    <location>
        <begin position="1298"/>
        <end position="1582"/>
    </location>
</feature>
<feature type="domain" description="ABC transmembrane type-1 1" evidence="4">
    <location>
        <begin position="299"/>
        <end position="602"/>
    </location>
</feature>
<feature type="domain" description="ABC transporter 1" evidence="3">
    <location>
        <begin position="679"/>
        <end position="930"/>
    </location>
</feature>
<feature type="domain" description="ABC transmembrane type-1 2" evidence="4">
    <location>
        <begin position="1013"/>
        <end position="1307"/>
    </location>
</feature>
<feature type="domain" description="ABC transporter 2" evidence="3">
    <location>
        <begin position="1345"/>
        <end position="1579"/>
    </location>
</feature>
<feature type="region of interest" description="Disordered" evidence="5">
    <location>
        <begin position="741"/>
        <end position="768"/>
    </location>
</feature>
<feature type="region of interest" description="Disordered" evidence="5">
    <location>
        <begin position="939"/>
        <end position="962"/>
    </location>
</feature>
<feature type="compositionally biased region" description="Basic and acidic residues" evidence="5">
    <location>
        <begin position="753"/>
        <end position="766"/>
    </location>
</feature>
<feature type="compositionally biased region" description="Basic and acidic residues" evidence="5">
    <location>
        <begin position="939"/>
        <end position="950"/>
    </location>
</feature>
<feature type="binding site" evidence="2">
    <location>
        <position position="688"/>
    </location>
    <ligand>
        <name>ATP</name>
        <dbReference type="ChEBI" id="CHEBI:30616"/>
    </ligand>
</feature>
<feature type="binding site" evidence="2">
    <location>
        <position position="716"/>
    </location>
    <ligand>
        <name>ATP</name>
        <dbReference type="ChEBI" id="CHEBI:30616"/>
    </ligand>
</feature>
<feature type="binding site" evidence="2">
    <location>
        <position position="720"/>
    </location>
    <ligand>
        <name>ATP</name>
        <dbReference type="ChEBI" id="CHEBI:30616"/>
    </ligand>
</feature>
<feature type="binding site" evidence="2">
    <location>
        <position position="720"/>
    </location>
    <ligand>
        <name>Mg(2+)</name>
        <dbReference type="ChEBI" id="CHEBI:18420"/>
    </ligand>
</feature>
<feature type="binding site" evidence="2">
    <location>
        <position position="721"/>
    </location>
    <ligand>
        <name>ATP</name>
        <dbReference type="ChEBI" id="CHEBI:30616"/>
    </ligand>
</feature>
<feature type="binding site" evidence="2">
    <location>
        <position position="775"/>
    </location>
    <ligand>
        <name>Mg(2+)</name>
        <dbReference type="ChEBI" id="CHEBI:18420"/>
    </ligand>
</feature>
<feature type="binding site" evidence="2">
    <location>
        <position position="1381"/>
    </location>
    <ligand>
        <name>ADP</name>
        <dbReference type="ChEBI" id="CHEBI:456216"/>
    </ligand>
</feature>
<feature type="binding site" evidence="2">
    <location>
        <position position="1382"/>
    </location>
    <ligand>
        <name>ADP</name>
        <dbReference type="ChEBI" id="CHEBI:456216"/>
    </ligand>
</feature>
<feature type="binding site" evidence="2">
    <location>
        <position position="1384"/>
    </location>
    <ligand>
        <name>ADP</name>
        <dbReference type="ChEBI" id="CHEBI:456216"/>
    </ligand>
</feature>
<feature type="binding site" evidence="2">
    <location>
        <position position="1385"/>
    </location>
    <ligand>
        <name>ADP</name>
        <dbReference type="ChEBI" id="CHEBI:456216"/>
    </ligand>
</feature>
<feature type="binding site" evidence="2">
    <location>
        <position position="1386"/>
    </location>
    <ligand>
        <name>ADP</name>
        <dbReference type="ChEBI" id="CHEBI:456216"/>
    </ligand>
</feature>
<feature type="binding site" evidence="2">
    <location>
        <position position="1387"/>
    </location>
    <ligand>
        <name>ADP</name>
        <dbReference type="ChEBI" id="CHEBI:456216"/>
    </ligand>
</feature>
<feature type="binding site" evidence="2">
    <location>
        <position position="1483"/>
    </location>
    <ligand>
        <name>ATP</name>
        <dbReference type="ChEBI" id="CHEBI:30616"/>
    </ligand>
</feature>
<feature type="glycosylation site" description="N-linked (GlcNAc...) asparagine" evidence="6">
    <location>
        <position position="10"/>
    </location>
</feature>
<feature type="glycosylation site" description="N-linked (GlcNAc...) asparagine" evidence="1">
    <location>
        <position position="1050"/>
    </location>
</feature>
<feature type="disulfide bond" evidence="2">
    <location>
        <begin position="6"/>
        <end position="26"/>
    </location>
</feature>
<feature type="splice variant" id="VSP_000056" description="In isoform C." evidence="7">
    <location>
        <position position="741"/>
    </location>
</feature>
<feature type="splice variant" id="VSP_000057" description="In isoform B." evidence="8">
    <location>
        <begin position="1252"/>
        <end position="1289"/>
    </location>
</feature>
<feature type="sequence conflict" description="In Ref. 1; AAA99237." evidence="9" ref="1">
    <original>S</original>
    <variation>T</variation>
    <location>
        <position position="487"/>
    </location>
</feature>
<feature type="sequence conflict" description="In Ref. 4; BAB19011." evidence="9" ref="4">
    <original>I</original>
    <variation>T</variation>
    <location>
        <position position="699"/>
    </location>
</feature>
<feature type="sequence conflict" description="In Ref. 1; AAA99237." evidence="9" ref="1">
    <original>QR</original>
    <variation>PG</variation>
    <location>
        <begin position="836"/>
        <end position="837"/>
    </location>
</feature>
<feature type="sequence conflict" description="In Ref. 1; AAA99237." evidence="9" ref="1">
    <original>R</original>
    <variation>G</variation>
    <location>
        <position position="1314"/>
    </location>
</feature>
<comment type="function">
    <text evidence="2">Regulator subunit of pancreatic ATP-sensitive potassium channel (KATP), playing a major role in the regulation of insulin release. In pancreatic cells, it forms KATP channels with KCNJ11; KCNJ11 forms the channel pore while ABCC8 is required for activation and regulation.</text>
</comment>
<comment type="activity regulation">
    <text evidence="2">KATP channels are regulated by cytoplasmic ATP/ADP ratios; ATP inhibits the channel by closing the pore, while ADP activates the channel. Activated by phosphatidylinositol 4,5-biphosphate (PtdIns(4,5)P2).</text>
</comment>
<comment type="subunit">
    <text evidence="2">Forms an heterooctamer with KCNJ11; four ABCC8/SUR1 molecules interact with one KCNJ11 homotetramer.</text>
</comment>
<comment type="subcellular location">
    <subcellularLocation>
        <location evidence="2">Cell membrane</location>
        <topology evidence="2">Multi-pass membrane protein</topology>
    </subcellularLocation>
</comment>
<comment type="alternative products">
    <event type="alternative splicing"/>
    <isoform>
        <id>Q09429-1</id>
        <name>A</name>
        <sequence type="displayed"/>
    </isoform>
    <isoform>
        <id>Q09429-2</id>
        <name>B</name>
        <sequence type="described" ref="VSP_000057"/>
    </isoform>
    <isoform>
        <id>Q09429-3</id>
        <name>C</name>
        <sequence type="described" ref="VSP_000056"/>
    </isoform>
    <text>Experimental confirmation may be lacking for some isoforms.</text>
</comment>
<comment type="similarity">
    <text evidence="9">Belongs to the ABC transporter superfamily. ABCC family. Conjugate transporter (TC 3.A.1.208) subfamily.</text>
</comment>
<gene>
    <name type="primary">Abcc8</name>
    <name type="synonym">Sur</name>
    <name type="synonym">Sur1</name>
</gene>
<reference key="1">
    <citation type="journal article" date="1995" name="Science">
        <title>Cloning of the beta cell high-affinity sulfonylurea receptor: a regulator of insulin secretion.</title>
        <authorList>
            <person name="Aguilar-Bryan L."/>
            <person name="Nichols C.G."/>
            <person name="Wechsler S.W."/>
            <person name="Clement J.P. IV"/>
            <person name="Boyd A.E. III"/>
            <person name="Gonzalez G."/>
            <person name="Herrera-Sosa H."/>
            <person name="Nguy K."/>
            <person name="Bryan J."/>
            <person name="Nelson D.A."/>
        </authorList>
    </citation>
    <scope>NUCLEOTIDE SEQUENCE [MRNA] (ISOFORM C)</scope>
    <source>
        <tissue>Pancreatic islet</tissue>
    </source>
</reference>
<reference key="2">
    <citation type="submission" date="1996-04" db="EMBL/GenBank/DDBJ databases">
        <authorList>
            <person name="Faure C."/>
            <person name="Partiseti M."/>
            <person name="Gouhier C."/>
            <person name="Graham D."/>
        </authorList>
    </citation>
    <scope>NUCLEOTIDE SEQUENCE [MRNA] (ISOFORM A)</scope>
    <source>
        <tissue>Pancreatic islet</tissue>
    </source>
</reference>
<reference key="3">
    <citation type="submission" date="1997-12" db="EMBL/GenBank/DDBJ databases">
        <title>Identification of two forms of sulfonylurea receptors (SUR 1A and SUR 1B) by means of polymerase chain reaction, subcloning, DNA sequencing and tissue distribution.</title>
        <authorList>
            <person name="Blache P."/>
            <person name="Peyrollier K."/>
            <person name="Gros L."/>
            <person name="Bataille D."/>
        </authorList>
    </citation>
    <scope>NUCLEOTIDE SEQUENCE [MRNA] (ISOFORM B)</scope>
    <source>
        <tissue>Pancreatic islet</tissue>
    </source>
</reference>
<reference key="4">
    <citation type="submission" date="2000-12" db="EMBL/GenBank/DDBJ databases">
        <authorList>
            <person name="Cao K."/>
            <person name="Wang R."/>
        </authorList>
    </citation>
    <scope>NUCLEOTIDE SEQUENCE [MRNA] (ISOFORM A)</scope>
    <source>
        <tissue>Vascular smooth muscle</tissue>
    </source>
</reference>
<reference key="5">
    <citation type="journal article" date="1996" name="Biochemistry">
        <title>The high-affinity sulfonylurea receptor: distribution, glycosylation, purification, and immunoprecipitation of two forms from endocrine and neuroendocrine cell lines.</title>
        <authorList>
            <person name="Nelson D.A."/>
            <person name="Bryan J."/>
            <person name="Wechsler S."/>
            <person name="Clement J.P. IV"/>
            <person name="Aguilar-Bryan L."/>
        </authorList>
    </citation>
    <scope>GLYCOSYLATION AT ASN-10</scope>
</reference>